<accession>A2T320</accession>
<sequence>MDIEQPSINVINSLYQISGVEVGQHFYLQIGNFQVHAQVLITSWVVIAILLGLSIVATRDLQTIPTGSQNFIEYVLEFIRDLTRTQIGEEEYRPWVPFIGTMFLFIFVSNWSGALFPWRIIQLPHGELAAPTNDINTTVALALLTSVAYFYAGLHKRGLSYFGKYIQPTPVLLPINILEDFTKPLSLSFRLFGNILADELVVAVLISLVPLVVPIPMMFLGLFTSAIQALIFATLAAAYIGESMEGHH</sequence>
<comment type="function">
    <text evidence="1">Key component of the proton channel; it plays a direct role in the translocation of protons across the membrane.</text>
</comment>
<comment type="subunit">
    <text evidence="1">F-type ATPases have 2 components, CF(1) - the catalytic core - and CF(0) - the membrane proton channel. CF(1) has five subunits: alpha(3), beta(3), gamma(1), delta(1), epsilon(1). CF(0) has four main subunits: a, b, b' and c.</text>
</comment>
<comment type="subcellular location">
    <subcellularLocation>
        <location evidence="1">Plastid</location>
        <location evidence="1">Chloroplast thylakoid membrane</location>
        <topology evidence="1">Multi-pass membrane protein</topology>
    </subcellularLocation>
</comment>
<comment type="similarity">
    <text evidence="1">Belongs to the ATPase A chain family.</text>
</comment>
<reference key="1">
    <citation type="journal article" date="2007" name="Am. Fern J.">
        <title>The complete plastid genome sequence of Angiopteris evecta (G. Forst.) Hoffm. (Marattiaceae).</title>
        <authorList>
            <person name="Roper J.M."/>
            <person name="Hansen S.K."/>
            <person name="Wolf P.G."/>
            <person name="Karol K.G."/>
            <person name="Mandoli D.F."/>
            <person name="Everett K.D.E."/>
            <person name="Kuehl J."/>
            <person name="Boore J.L."/>
        </authorList>
    </citation>
    <scope>NUCLEOTIDE SEQUENCE [LARGE SCALE GENOMIC DNA]</scope>
</reference>
<dbReference type="EMBL" id="DQ821119">
    <property type="protein sequence ID" value="ABG79587.1"/>
    <property type="molecule type" value="Genomic_DNA"/>
</dbReference>
<dbReference type="RefSeq" id="YP_001023688.1">
    <property type="nucleotide sequence ID" value="NC_008829.1"/>
</dbReference>
<dbReference type="SMR" id="A2T320"/>
<dbReference type="GeneID" id="4788216"/>
<dbReference type="GO" id="GO:0009535">
    <property type="term" value="C:chloroplast thylakoid membrane"/>
    <property type="evidence" value="ECO:0007669"/>
    <property type="project" value="UniProtKB-SubCell"/>
</dbReference>
<dbReference type="GO" id="GO:0005886">
    <property type="term" value="C:plasma membrane"/>
    <property type="evidence" value="ECO:0007669"/>
    <property type="project" value="UniProtKB-UniRule"/>
</dbReference>
<dbReference type="GO" id="GO:0045259">
    <property type="term" value="C:proton-transporting ATP synthase complex"/>
    <property type="evidence" value="ECO:0007669"/>
    <property type="project" value="UniProtKB-KW"/>
</dbReference>
<dbReference type="GO" id="GO:0046933">
    <property type="term" value="F:proton-transporting ATP synthase activity, rotational mechanism"/>
    <property type="evidence" value="ECO:0007669"/>
    <property type="project" value="UniProtKB-UniRule"/>
</dbReference>
<dbReference type="CDD" id="cd00310">
    <property type="entry name" value="ATP-synt_Fo_a_6"/>
    <property type="match status" value="1"/>
</dbReference>
<dbReference type="FunFam" id="1.20.120.220:FF:000001">
    <property type="entry name" value="ATP synthase subunit a, chloroplastic"/>
    <property type="match status" value="1"/>
</dbReference>
<dbReference type="Gene3D" id="1.20.120.220">
    <property type="entry name" value="ATP synthase, F0 complex, subunit A"/>
    <property type="match status" value="1"/>
</dbReference>
<dbReference type="HAMAP" id="MF_01393">
    <property type="entry name" value="ATP_synth_a_bact"/>
    <property type="match status" value="1"/>
</dbReference>
<dbReference type="InterPro" id="IPR045082">
    <property type="entry name" value="ATP_syn_F0_a_bact/chloroplast"/>
</dbReference>
<dbReference type="InterPro" id="IPR000568">
    <property type="entry name" value="ATP_synth_F0_asu"/>
</dbReference>
<dbReference type="InterPro" id="IPR023011">
    <property type="entry name" value="ATP_synth_F0_asu_AS"/>
</dbReference>
<dbReference type="InterPro" id="IPR035908">
    <property type="entry name" value="F0_ATP_A_sf"/>
</dbReference>
<dbReference type="NCBIfam" id="TIGR01131">
    <property type="entry name" value="ATP_synt_6_or_A"/>
    <property type="match status" value="1"/>
</dbReference>
<dbReference type="PANTHER" id="PTHR42823">
    <property type="entry name" value="ATP SYNTHASE SUBUNIT A, CHLOROPLASTIC"/>
    <property type="match status" value="1"/>
</dbReference>
<dbReference type="PANTHER" id="PTHR42823:SF3">
    <property type="entry name" value="ATP SYNTHASE SUBUNIT A, CHLOROPLASTIC"/>
    <property type="match status" value="1"/>
</dbReference>
<dbReference type="Pfam" id="PF00119">
    <property type="entry name" value="ATP-synt_A"/>
    <property type="match status" value="1"/>
</dbReference>
<dbReference type="PRINTS" id="PR00123">
    <property type="entry name" value="ATPASEA"/>
</dbReference>
<dbReference type="SUPFAM" id="SSF81336">
    <property type="entry name" value="F1F0 ATP synthase subunit A"/>
    <property type="match status" value="1"/>
</dbReference>
<dbReference type="PROSITE" id="PS00449">
    <property type="entry name" value="ATPASE_A"/>
    <property type="match status" value="1"/>
</dbReference>
<feature type="chain" id="PRO_0000362529" description="ATP synthase subunit a, chloroplastic">
    <location>
        <begin position="1"/>
        <end position="248"/>
    </location>
</feature>
<feature type="transmembrane region" description="Helical" evidence="1">
    <location>
        <begin position="37"/>
        <end position="57"/>
    </location>
</feature>
<feature type="transmembrane region" description="Helical" evidence="1">
    <location>
        <begin position="96"/>
        <end position="116"/>
    </location>
</feature>
<feature type="transmembrane region" description="Helical" evidence="1">
    <location>
        <begin position="135"/>
        <end position="155"/>
    </location>
</feature>
<feature type="transmembrane region" description="Helical" evidence="1">
    <location>
        <begin position="200"/>
        <end position="220"/>
    </location>
</feature>
<feature type="transmembrane region" description="Helical" evidence="1">
    <location>
        <begin position="221"/>
        <end position="241"/>
    </location>
</feature>
<organism>
    <name type="scientific">Angiopteris evecta</name>
    <name type="common">Mule's foot fern</name>
    <name type="synonym">Polypodium evectum</name>
    <dbReference type="NCBI Taxonomy" id="13825"/>
    <lineage>
        <taxon>Eukaryota</taxon>
        <taxon>Viridiplantae</taxon>
        <taxon>Streptophyta</taxon>
        <taxon>Embryophyta</taxon>
        <taxon>Tracheophyta</taxon>
        <taxon>Polypodiopsida</taxon>
        <taxon>Marattiidae</taxon>
        <taxon>Marattiales</taxon>
        <taxon>Marattiaceae</taxon>
        <taxon>Angiopteris</taxon>
    </lineage>
</organism>
<evidence type="ECO:0000255" key="1">
    <source>
        <dbReference type="HAMAP-Rule" id="MF_01393"/>
    </source>
</evidence>
<gene>
    <name evidence="1" type="primary">atpI</name>
</gene>
<proteinExistence type="inferred from homology"/>
<protein>
    <recommendedName>
        <fullName evidence="1">ATP synthase subunit a, chloroplastic</fullName>
    </recommendedName>
    <alternativeName>
        <fullName evidence="1">ATP synthase F0 sector subunit a</fullName>
    </alternativeName>
    <alternativeName>
        <fullName evidence="1">F-ATPase subunit IV</fullName>
    </alternativeName>
</protein>
<keyword id="KW-0066">ATP synthesis</keyword>
<keyword id="KW-0138">CF(0)</keyword>
<keyword id="KW-0150">Chloroplast</keyword>
<keyword id="KW-0375">Hydrogen ion transport</keyword>
<keyword id="KW-0406">Ion transport</keyword>
<keyword id="KW-0472">Membrane</keyword>
<keyword id="KW-0934">Plastid</keyword>
<keyword id="KW-0793">Thylakoid</keyword>
<keyword id="KW-0812">Transmembrane</keyword>
<keyword id="KW-1133">Transmembrane helix</keyword>
<keyword id="KW-0813">Transport</keyword>
<geneLocation type="chloroplast"/>
<name>ATPI_ANGEV</name>